<comment type="function">
    <text evidence="1">Is required not only for elongation of protein synthesis but also for the initiation of all mRNA translation through initiator tRNA(fMet) aminoacylation.</text>
</comment>
<comment type="catalytic activity">
    <reaction evidence="1">
        <text>tRNA(Met) + L-methionine + ATP = L-methionyl-tRNA(Met) + AMP + diphosphate</text>
        <dbReference type="Rhea" id="RHEA:13481"/>
        <dbReference type="Rhea" id="RHEA-COMP:9667"/>
        <dbReference type="Rhea" id="RHEA-COMP:9698"/>
        <dbReference type="ChEBI" id="CHEBI:30616"/>
        <dbReference type="ChEBI" id="CHEBI:33019"/>
        <dbReference type="ChEBI" id="CHEBI:57844"/>
        <dbReference type="ChEBI" id="CHEBI:78442"/>
        <dbReference type="ChEBI" id="CHEBI:78530"/>
        <dbReference type="ChEBI" id="CHEBI:456215"/>
        <dbReference type="EC" id="6.1.1.10"/>
    </reaction>
</comment>
<comment type="cofactor">
    <cofactor evidence="1">
        <name>Zn(2+)</name>
        <dbReference type="ChEBI" id="CHEBI:29105"/>
    </cofactor>
    <text evidence="1">Binds 1 zinc ion per subunit.</text>
</comment>
<comment type="subunit">
    <text evidence="1">Homodimer.</text>
</comment>
<comment type="subcellular location">
    <subcellularLocation>
        <location evidence="1">Cytoplasm</location>
    </subcellularLocation>
</comment>
<comment type="similarity">
    <text evidence="1">Belongs to the class-I aminoacyl-tRNA synthetase family. MetG type 1 subfamily.</text>
</comment>
<comment type="sequence caution" evidence="2">
    <conflict type="erroneous initiation">
        <sequence resource="EMBL-CDS" id="BAD51240"/>
    </conflict>
</comment>
<evidence type="ECO:0000255" key="1">
    <source>
        <dbReference type="HAMAP-Rule" id="MF_00098"/>
    </source>
</evidence>
<evidence type="ECO:0000305" key="2"/>
<keyword id="KW-0030">Aminoacyl-tRNA synthetase</keyword>
<keyword id="KW-0067">ATP-binding</keyword>
<keyword id="KW-0963">Cytoplasm</keyword>
<keyword id="KW-0436">Ligase</keyword>
<keyword id="KW-0479">Metal-binding</keyword>
<keyword id="KW-0547">Nucleotide-binding</keyword>
<keyword id="KW-0648">Protein biosynthesis</keyword>
<keyword id="KW-0694">RNA-binding</keyword>
<keyword id="KW-0820">tRNA-binding</keyword>
<keyword id="KW-0862">Zinc</keyword>
<protein>
    <recommendedName>
        <fullName evidence="1">Methionine--tRNA ligase</fullName>
        <ecNumber evidence="1">6.1.1.10</ecNumber>
    </recommendedName>
    <alternativeName>
        <fullName evidence="1">Methionyl-tRNA synthetase</fullName>
        <shortName evidence="1">MetRS</shortName>
    </alternativeName>
</protein>
<reference key="1">
    <citation type="journal article" date="2004" name="Proc. Natl. Acad. Sci. U.S.A.">
        <title>Genomic analysis of Bacteroides fragilis reveals extensive DNA inversions regulating cell surface adaptation.</title>
        <authorList>
            <person name="Kuwahara T."/>
            <person name="Yamashita A."/>
            <person name="Hirakawa H."/>
            <person name="Nakayama H."/>
            <person name="Toh H."/>
            <person name="Okada N."/>
            <person name="Kuhara S."/>
            <person name="Hattori M."/>
            <person name="Hayashi T."/>
            <person name="Ohnishi Y."/>
        </authorList>
    </citation>
    <scope>NUCLEOTIDE SEQUENCE [LARGE SCALE GENOMIC DNA]</scope>
    <source>
        <strain>YCH46</strain>
    </source>
</reference>
<feature type="chain" id="PRO_0000139101" description="Methionine--tRNA ligase">
    <location>
        <begin position="1"/>
        <end position="679"/>
    </location>
</feature>
<feature type="domain" description="tRNA-binding" evidence="1">
    <location>
        <begin position="578"/>
        <end position="679"/>
    </location>
</feature>
<feature type="short sequence motif" description="'KMSKS' region">
    <location>
        <begin position="332"/>
        <end position="336"/>
    </location>
</feature>
<feature type="binding site" evidence="1">
    <location>
        <position position="147"/>
    </location>
    <ligand>
        <name>Zn(2+)</name>
        <dbReference type="ChEBI" id="CHEBI:29105"/>
    </ligand>
</feature>
<feature type="binding site" evidence="1">
    <location>
        <position position="150"/>
    </location>
    <ligand>
        <name>Zn(2+)</name>
        <dbReference type="ChEBI" id="CHEBI:29105"/>
    </ligand>
</feature>
<feature type="binding site" evidence="1">
    <location>
        <position position="160"/>
    </location>
    <ligand>
        <name>Zn(2+)</name>
        <dbReference type="ChEBI" id="CHEBI:29105"/>
    </ligand>
</feature>
<feature type="binding site" evidence="1">
    <location>
        <position position="163"/>
    </location>
    <ligand>
        <name>Zn(2+)</name>
        <dbReference type="ChEBI" id="CHEBI:29105"/>
    </ligand>
</feature>
<feature type="binding site" evidence="1">
    <location>
        <position position="335"/>
    </location>
    <ligand>
        <name>ATP</name>
        <dbReference type="ChEBI" id="CHEBI:30616"/>
    </ligand>
</feature>
<proteinExistence type="inferred from homology"/>
<name>SYM_BACFR</name>
<sequence length="679" mass="77595">MEKNFKRTTVTSALPYANGPVHIGHLAGVYVPADIYVRYLRLKKEDVLFIGGSDEHGVPITIRAKKEGITPQDVVDRYHFLIKKSFEEFGISFDVYSRTSSKTHHELASDFFKKLYEKGEFIEKTSEQYYDEEAHQFLADRYITGECPHCHSEGAYGDQCEKCGTSLSPTDLINPKSAISGSKPVMKETKHWYLPLDKHETWLRQWILEEHKEWRPNVYGQCKSWLDMGLQPRAVSRDLDWGIPVPVEGAEGKVLYVWFDAPIGYISNTKELLPDSWETWWKDPETRLVHFIGKDNIVFHCIVFPAMLKAEGSYILPDNVPSNEFLNLEGDKISTSRNWAVWLHEYLEDFPGKQDVLRYVLTANAPETKDNDFTWKDFQARNNNELVAVYGNFVNRAMVLTQKYFEGKVPAAGELTDYDKETLKEFSDVKAEVEKLLNVFKFRDAQKEAMNLARIGNKYLADTEPWKLAKTDMERVGTILNISLQLVANLAIAFEPFLPFSSERLRQMLNMDSFDWAELGRNDLLPAGHQLNKPELLFEKIEDATIEAQVQKLLDTKKANEEANYKAKPIRANIEFDDFMKLDIRVGTVLECQKVPKADKLLQFKIDDGLETRTIVSGIAQHYKPEELVGKQVCFIANLAPRKLKGIVSEGMILSAENNDGSLAVVMPGREVKPGSEVK</sequence>
<dbReference type="EC" id="6.1.1.10" evidence="1"/>
<dbReference type="EMBL" id="AP006841">
    <property type="protein sequence ID" value="BAD51240.1"/>
    <property type="status" value="ALT_INIT"/>
    <property type="molecule type" value="Genomic_DNA"/>
</dbReference>
<dbReference type="RefSeq" id="WP_005791925.1">
    <property type="nucleotide sequence ID" value="NC_006347.1"/>
</dbReference>
<dbReference type="RefSeq" id="YP_101774.3">
    <property type="nucleotide sequence ID" value="NC_006347.1"/>
</dbReference>
<dbReference type="SMR" id="Q64MP7"/>
<dbReference type="STRING" id="295405.BF4503"/>
<dbReference type="KEGG" id="bfr:BF4503"/>
<dbReference type="PATRIC" id="fig|295405.11.peg.4335"/>
<dbReference type="HOGENOM" id="CLU_009710_1_2_10"/>
<dbReference type="OrthoDB" id="9810191at2"/>
<dbReference type="Proteomes" id="UP000002197">
    <property type="component" value="Chromosome"/>
</dbReference>
<dbReference type="GO" id="GO:0005829">
    <property type="term" value="C:cytosol"/>
    <property type="evidence" value="ECO:0007669"/>
    <property type="project" value="TreeGrafter"/>
</dbReference>
<dbReference type="GO" id="GO:0005524">
    <property type="term" value="F:ATP binding"/>
    <property type="evidence" value="ECO:0007669"/>
    <property type="project" value="UniProtKB-UniRule"/>
</dbReference>
<dbReference type="GO" id="GO:0046872">
    <property type="term" value="F:metal ion binding"/>
    <property type="evidence" value="ECO:0007669"/>
    <property type="project" value="UniProtKB-KW"/>
</dbReference>
<dbReference type="GO" id="GO:0004825">
    <property type="term" value="F:methionine-tRNA ligase activity"/>
    <property type="evidence" value="ECO:0007669"/>
    <property type="project" value="UniProtKB-UniRule"/>
</dbReference>
<dbReference type="GO" id="GO:0000049">
    <property type="term" value="F:tRNA binding"/>
    <property type="evidence" value="ECO:0007669"/>
    <property type="project" value="UniProtKB-KW"/>
</dbReference>
<dbReference type="GO" id="GO:0006431">
    <property type="term" value="P:methionyl-tRNA aminoacylation"/>
    <property type="evidence" value="ECO:0007669"/>
    <property type="project" value="UniProtKB-UniRule"/>
</dbReference>
<dbReference type="CDD" id="cd07957">
    <property type="entry name" value="Anticodon_Ia_Met"/>
    <property type="match status" value="1"/>
</dbReference>
<dbReference type="CDD" id="cd00814">
    <property type="entry name" value="MetRS_core"/>
    <property type="match status" value="1"/>
</dbReference>
<dbReference type="CDD" id="cd02800">
    <property type="entry name" value="tRNA_bind_EcMetRS_like"/>
    <property type="match status" value="1"/>
</dbReference>
<dbReference type="FunFam" id="1.10.730.10:FF:000030">
    <property type="entry name" value="Methionine--tRNA ligase"/>
    <property type="match status" value="1"/>
</dbReference>
<dbReference type="FunFam" id="2.20.28.20:FF:000001">
    <property type="entry name" value="Methionine--tRNA ligase"/>
    <property type="match status" value="1"/>
</dbReference>
<dbReference type="FunFam" id="2.40.50.140:FF:000042">
    <property type="entry name" value="Methionine--tRNA ligase"/>
    <property type="match status" value="1"/>
</dbReference>
<dbReference type="Gene3D" id="3.40.50.620">
    <property type="entry name" value="HUPs"/>
    <property type="match status" value="1"/>
</dbReference>
<dbReference type="Gene3D" id="1.10.730.10">
    <property type="entry name" value="Isoleucyl-tRNA Synthetase, Domain 1"/>
    <property type="match status" value="1"/>
</dbReference>
<dbReference type="Gene3D" id="2.20.28.20">
    <property type="entry name" value="Methionyl-tRNA synthetase, Zn-domain"/>
    <property type="match status" value="1"/>
</dbReference>
<dbReference type="Gene3D" id="2.40.50.140">
    <property type="entry name" value="Nucleic acid-binding proteins"/>
    <property type="match status" value="1"/>
</dbReference>
<dbReference type="HAMAP" id="MF_00098">
    <property type="entry name" value="Met_tRNA_synth_type1"/>
    <property type="match status" value="1"/>
</dbReference>
<dbReference type="InterPro" id="IPR001412">
    <property type="entry name" value="aa-tRNA-synth_I_CS"/>
</dbReference>
<dbReference type="InterPro" id="IPR041872">
    <property type="entry name" value="Anticodon_Met"/>
</dbReference>
<dbReference type="InterPro" id="IPR004495">
    <property type="entry name" value="Met-tRNA-synth_bsu_C"/>
</dbReference>
<dbReference type="InterPro" id="IPR023458">
    <property type="entry name" value="Met-tRNA_ligase_1"/>
</dbReference>
<dbReference type="InterPro" id="IPR014758">
    <property type="entry name" value="Met-tRNA_synth"/>
</dbReference>
<dbReference type="InterPro" id="IPR015413">
    <property type="entry name" value="Methionyl/Leucyl_tRNA_Synth"/>
</dbReference>
<dbReference type="InterPro" id="IPR033911">
    <property type="entry name" value="MetRS_core"/>
</dbReference>
<dbReference type="InterPro" id="IPR029038">
    <property type="entry name" value="MetRS_Zn"/>
</dbReference>
<dbReference type="InterPro" id="IPR012340">
    <property type="entry name" value="NA-bd_OB-fold"/>
</dbReference>
<dbReference type="InterPro" id="IPR014729">
    <property type="entry name" value="Rossmann-like_a/b/a_fold"/>
</dbReference>
<dbReference type="InterPro" id="IPR002547">
    <property type="entry name" value="tRNA-bd_dom"/>
</dbReference>
<dbReference type="InterPro" id="IPR009080">
    <property type="entry name" value="tRNAsynth_Ia_anticodon-bd"/>
</dbReference>
<dbReference type="NCBIfam" id="TIGR00398">
    <property type="entry name" value="metG"/>
    <property type="match status" value="1"/>
</dbReference>
<dbReference type="NCBIfam" id="TIGR00399">
    <property type="entry name" value="metG_C_term"/>
    <property type="match status" value="1"/>
</dbReference>
<dbReference type="NCBIfam" id="NF001100">
    <property type="entry name" value="PRK00133.1"/>
    <property type="match status" value="1"/>
</dbReference>
<dbReference type="PANTHER" id="PTHR45765">
    <property type="entry name" value="METHIONINE--TRNA LIGASE"/>
    <property type="match status" value="1"/>
</dbReference>
<dbReference type="PANTHER" id="PTHR45765:SF1">
    <property type="entry name" value="METHIONINE--TRNA LIGASE, CYTOPLASMIC"/>
    <property type="match status" value="1"/>
</dbReference>
<dbReference type="Pfam" id="PF19303">
    <property type="entry name" value="Anticodon_3"/>
    <property type="match status" value="1"/>
</dbReference>
<dbReference type="Pfam" id="PF09334">
    <property type="entry name" value="tRNA-synt_1g"/>
    <property type="match status" value="1"/>
</dbReference>
<dbReference type="Pfam" id="PF01588">
    <property type="entry name" value="tRNA_bind"/>
    <property type="match status" value="1"/>
</dbReference>
<dbReference type="PRINTS" id="PR01041">
    <property type="entry name" value="TRNASYNTHMET"/>
</dbReference>
<dbReference type="SUPFAM" id="SSF47323">
    <property type="entry name" value="Anticodon-binding domain of a subclass of class I aminoacyl-tRNA synthetases"/>
    <property type="match status" value="1"/>
</dbReference>
<dbReference type="SUPFAM" id="SSF57770">
    <property type="entry name" value="Methionyl-tRNA synthetase (MetRS), Zn-domain"/>
    <property type="match status" value="1"/>
</dbReference>
<dbReference type="SUPFAM" id="SSF50249">
    <property type="entry name" value="Nucleic acid-binding proteins"/>
    <property type="match status" value="1"/>
</dbReference>
<dbReference type="SUPFAM" id="SSF52374">
    <property type="entry name" value="Nucleotidylyl transferase"/>
    <property type="match status" value="1"/>
</dbReference>
<dbReference type="PROSITE" id="PS00178">
    <property type="entry name" value="AA_TRNA_LIGASE_I"/>
    <property type="match status" value="1"/>
</dbReference>
<dbReference type="PROSITE" id="PS50886">
    <property type="entry name" value="TRBD"/>
    <property type="match status" value="1"/>
</dbReference>
<gene>
    <name evidence="1" type="primary">metG</name>
    <name type="ordered locus">BF4503</name>
</gene>
<accession>Q64MP7</accession>
<organism>
    <name type="scientific">Bacteroides fragilis (strain YCH46)</name>
    <dbReference type="NCBI Taxonomy" id="295405"/>
    <lineage>
        <taxon>Bacteria</taxon>
        <taxon>Pseudomonadati</taxon>
        <taxon>Bacteroidota</taxon>
        <taxon>Bacteroidia</taxon>
        <taxon>Bacteroidales</taxon>
        <taxon>Bacteroidaceae</taxon>
        <taxon>Bacteroides</taxon>
    </lineage>
</organism>